<feature type="chain" id="PRO_1000076347" description="Tryptophan synthase alpha chain">
    <location>
        <begin position="1"/>
        <end position="279"/>
    </location>
</feature>
<feature type="active site" description="Proton acceptor" evidence="1">
    <location>
        <position position="50"/>
    </location>
</feature>
<feature type="active site" description="Proton acceptor" evidence="1">
    <location>
        <position position="61"/>
    </location>
</feature>
<comment type="function">
    <text evidence="1">The alpha subunit is responsible for the aldol cleavage of indoleglycerol phosphate to indole and glyceraldehyde 3-phosphate.</text>
</comment>
<comment type="catalytic activity">
    <reaction evidence="1">
        <text>(1S,2R)-1-C-(indol-3-yl)glycerol 3-phosphate + L-serine = D-glyceraldehyde 3-phosphate + L-tryptophan + H2O</text>
        <dbReference type="Rhea" id="RHEA:10532"/>
        <dbReference type="ChEBI" id="CHEBI:15377"/>
        <dbReference type="ChEBI" id="CHEBI:33384"/>
        <dbReference type="ChEBI" id="CHEBI:57912"/>
        <dbReference type="ChEBI" id="CHEBI:58866"/>
        <dbReference type="ChEBI" id="CHEBI:59776"/>
        <dbReference type="EC" id="4.2.1.20"/>
    </reaction>
</comment>
<comment type="pathway">
    <text evidence="1">Amino-acid biosynthesis; L-tryptophan biosynthesis; L-tryptophan from chorismate: step 5/5.</text>
</comment>
<comment type="subunit">
    <text evidence="1">Tetramer of two alpha and two beta chains.</text>
</comment>
<comment type="similarity">
    <text evidence="1">Belongs to the TrpA family.</text>
</comment>
<evidence type="ECO:0000255" key="1">
    <source>
        <dbReference type="HAMAP-Rule" id="MF_00131"/>
    </source>
</evidence>
<proteinExistence type="inferred from homology"/>
<organism>
    <name type="scientific">Brucella suis (strain ATCC 23445 / NCTC 10510)</name>
    <dbReference type="NCBI Taxonomy" id="470137"/>
    <lineage>
        <taxon>Bacteria</taxon>
        <taxon>Pseudomonadati</taxon>
        <taxon>Pseudomonadota</taxon>
        <taxon>Alphaproteobacteria</taxon>
        <taxon>Hyphomicrobiales</taxon>
        <taxon>Brucellaceae</taxon>
        <taxon>Brucella/Ochrobactrum group</taxon>
        <taxon>Brucella</taxon>
    </lineage>
</organism>
<protein>
    <recommendedName>
        <fullName evidence="1">Tryptophan synthase alpha chain</fullName>
        <ecNumber evidence="1">4.2.1.20</ecNumber>
    </recommendedName>
</protein>
<keyword id="KW-0028">Amino-acid biosynthesis</keyword>
<keyword id="KW-0057">Aromatic amino acid biosynthesis</keyword>
<keyword id="KW-0456">Lyase</keyword>
<keyword id="KW-0822">Tryptophan biosynthesis</keyword>
<name>TRPA_BRUSI</name>
<gene>
    <name evidence="1" type="primary">trpA</name>
    <name type="ordered locus">BSUIS_A1948</name>
</gene>
<accession>B0CJK6</accession>
<dbReference type="EC" id="4.2.1.20" evidence="1"/>
<dbReference type="EMBL" id="CP000911">
    <property type="protein sequence ID" value="ABY38958.1"/>
    <property type="molecule type" value="Genomic_DNA"/>
</dbReference>
<dbReference type="RefSeq" id="WP_006071800.1">
    <property type="nucleotide sequence ID" value="NC_010169.1"/>
</dbReference>
<dbReference type="SMR" id="B0CJK6"/>
<dbReference type="KEGG" id="bmt:BSUIS_A1948"/>
<dbReference type="HOGENOM" id="CLU_016734_0_0_5"/>
<dbReference type="UniPathway" id="UPA00035">
    <property type="reaction ID" value="UER00044"/>
</dbReference>
<dbReference type="Proteomes" id="UP000008545">
    <property type="component" value="Chromosome I"/>
</dbReference>
<dbReference type="GO" id="GO:0005829">
    <property type="term" value="C:cytosol"/>
    <property type="evidence" value="ECO:0007669"/>
    <property type="project" value="TreeGrafter"/>
</dbReference>
<dbReference type="GO" id="GO:0004834">
    <property type="term" value="F:tryptophan synthase activity"/>
    <property type="evidence" value="ECO:0007669"/>
    <property type="project" value="UniProtKB-UniRule"/>
</dbReference>
<dbReference type="CDD" id="cd04724">
    <property type="entry name" value="Tryptophan_synthase_alpha"/>
    <property type="match status" value="1"/>
</dbReference>
<dbReference type="FunFam" id="3.20.20.70:FF:000037">
    <property type="entry name" value="Tryptophan synthase alpha chain"/>
    <property type="match status" value="1"/>
</dbReference>
<dbReference type="Gene3D" id="3.20.20.70">
    <property type="entry name" value="Aldolase class I"/>
    <property type="match status" value="1"/>
</dbReference>
<dbReference type="HAMAP" id="MF_00131">
    <property type="entry name" value="Trp_synth_alpha"/>
    <property type="match status" value="1"/>
</dbReference>
<dbReference type="InterPro" id="IPR013785">
    <property type="entry name" value="Aldolase_TIM"/>
</dbReference>
<dbReference type="InterPro" id="IPR011060">
    <property type="entry name" value="RibuloseP-bd_barrel"/>
</dbReference>
<dbReference type="InterPro" id="IPR018204">
    <property type="entry name" value="Trp_synthase_alpha_AS"/>
</dbReference>
<dbReference type="InterPro" id="IPR002028">
    <property type="entry name" value="Trp_synthase_suA"/>
</dbReference>
<dbReference type="NCBIfam" id="TIGR00262">
    <property type="entry name" value="trpA"/>
    <property type="match status" value="1"/>
</dbReference>
<dbReference type="PANTHER" id="PTHR43406:SF1">
    <property type="entry name" value="TRYPTOPHAN SYNTHASE ALPHA CHAIN, CHLOROPLASTIC"/>
    <property type="match status" value="1"/>
</dbReference>
<dbReference type="PANTHER" id="PTHR43406">
    <property type="entry name" value="TRYPTOPHAN SYNTHASE, ALPHA CHAIN"/>
    <property type="match status" value="1"/>
</dbReference>
<dbReference type="Pfam" id="PF00290">
    <property type="entry name" value="Trp_syntA"/>
    <property type="match status" value="1"/>
</dbReference>
<dbReference type="SUPFAM" id="SSF51366">
    <property type="entry name" value="Ribulose-phoshate binding barrel"/>
    <property type="match status" value="1"/>
</dbReference>
<dbReference type="PROSITE" id="PS00167">
    <property type="entry name" value="TRP_SYNTHASE_ALPHA"/>
    <property type="match status" value="1"/>
</dbReference>
<sequence length="279" mass="29428">MTTRIDTKFAELKAEGRPALVTYFMGGDPDLETALKVMKALPKAGADVIELGMPFSDPMADGPAIQAAGLRALNAGQTLAKTLYMAAEFRKEDDTTPIVMMGYYNPIYVYGVERFLTDAKASGVDGLIVVDLPSEMDAELCIPAMKAGINFIRLTTPTTDDKRLPKVLHNSSGFVYYVSMNGITGAAIADTAKVGEAVRHIKKSTDLPICVGFGVKTPEQAAAIATHADGVVVGTAIVNAIAGELDEKGKVKGDPVAAATQLVHALAESVRATRLEAAQ</sequence>
<reference key="1">
    <citation type="submission" date="2007-12" db="EMBL/GenBank/DDBJ databases">
        <title>Brucella suis ATCC 23445 whole genome shotgun sequencing project.</title>
        <authorList>
            <person name="Setubal J.C."/>
            <person name="Bowns C."/>
            <person name="Boyle S."/>
            <person name="Crasta O.R."/>
            <person name="Czar M.J."/>
            <person name="Dharmanolla C."/>
            <person name="Gillespie J.J."/>
            <person name="Kenyon R.W."/>
            <person name="Lu J."/>
            <person name="Mane S."/>
            <person name="Mohapatra S."/>
            <person name="Nagrani S."/>
            <person name="Purkayastha A."/>
            <person name="Rajasimha H.K."/>
            <person name="Shallom J.M."/>
            <person name="Shallom S."/>
            <person name="Shukla M."/>
            <person name="Snyder E.E."/>
            <person name="Sobral B.W."/>
            <person name="Wattam A.R."/>
            <person name="Will R."/>
            <person name="Williams K."/>
            <person name="Yoo H."/>
            <person name="Bruce D."/>
            <person name="Detter C."/>
            <person name="Munk C."/>
            <person name="Brettin T.S."/>
        </authorList>
    </citation>
    <scope>NUCLEOTIDE SEQUENCE [LARGE SCALE GENOMIC DNA]</scope>
    <source>
        <strain>ATCC 23445 / NCTC 10510</strain>
    </source>
</reference>